<feature type="chain" id="PRO_0000297309" description="3-methyl-2-oxobutanoate hydroxymethyltransferase">
    <location>
        <begin position="1"/>
        <end position="264"/>
    </location>
</feature>
<feature type="active site" description="Proton acceptor" evidence="1">
    <location>
        <position position="182"/>
    </location>
</feature>
<feature type="binding site" evidence="1">
    <location>
        <begin position="45"/>
        <end position="46"/>
    </location>
    <ligand>
        <name>3-methyl-2-oxobutanoate</name>
        <dbReference type="ChEBI" id="CHEBI:11851"/>
    </ligand>
</feature>
<feature type="binding site" evidence="1">
    <location>
        <position position="45"/>
    </location>
    <ligand>
        <name>Mg(2+)</name>
        <dbReference type="ChEBI" id="CHEBI:18420"/>
    </ligand>
</feature>
<feature type="binding site" evidence="1">
    <location>
        <position position="84"/>
    </location>
    <ligand>
        <name>3-methyl-2-oxobutanoate</name>
        <dbReference type="ChEBI" id="CHEBI:11851"/>
    </ligand>
</feature>
<feature type="binding site" evidence="1">
    <location>
        <position position="84"/>
    </location>
    <ligand>
        <name>Mg(2+)</name>
        <dbReference type="ChEBI" id="CHEBI:18420"/>
    </ligand>
</feature>
<feature type="binding site" evidence="1">
    <location>
        <position position="113"/>
    </location>
    <ligand>
        <name>3-methyl-2-oxobutanoate</name>
        <dbReference type="ChEBI" id="CHEBI:11851"/>
    </ligand>
</feature>
<feature type="binding site" evidence="1">
    <location>
        <position position="115"/>
    </location>
    <ligand>
        <name>Mg(2+)</name>
        <dbReference type="ChEBI" id="CHEBI:18420"/>
    </ligand>
</feature>
<accession>Q3JCP9</accession>
<keyword id="KW-0963">Cytoplasm</keyword>
<keyword id="KW-0460">Magnesium</keyword>
<keyword id="KW-0479">Metal-binding</keyword>
<keyword id="KW-0566">Pantothenate biosynthesis</keyword>
<keyword id="KW-1185">Reference proteome</keyword>
<keyword id="KW-0808">Transferase</keyword>
<comment type="function">
    <text evidence="1">Catalyzes the reversible reaction in which hydroxymethyl group from 5,10-methylenetetrahydrofolate is transferred onto alpha-ketoisovalerate to form ketopantoate.</text>
</comment>
<comment type="catalytic activity">
    <reaction evidence="1">
        <text>3-methyl-2-oxobutanoate + (6R)-5,10-methylene-5,6,7,8-tetrahydrofolate + H2O = 2-dehydropantoate + (6S)-5,6,7,8-tetrahydrofolate</text>
        <dbReference type="Rhea" id="RHEA:11824"/>
        <dbReference type="ChEBI" id="CHEBI:11561"/>
        <dbReference type="ChEBI" id="CHEBI:11851"/>
        <dbReference type="ChEBI" id="CHEBI:15377"/>
        <dbReference type="ChEBI" id="CHEBI:15636"/>
        <dbReference type="ChEBI" id="CHEBI:57453"/>
        <dbReference type="EC" id="2.1.2.11"/>
    </reaction>
</comment>
<comment type="cofactor">
    <cofactor evidence="1">
        <name>Mg(2+)</name>
        <dbReference type="ChEBI" id="CHEBI:18420"/>
    </cofactor>
    <text evidence="1">Binds 1 Mg(2+) ion per subunit.</text>
</comment>
<comment type="pathway">
    <text evidence="1">Cofactor biosynthesis; (R)-pantothenate biosynthesis; (R)-pantoate from 3-methyl-2-oxobutanoate: step 1/2.</text>
</comment>
<comment type="subunit">
    <text evidence="1">Homodecamer; pentamer of dimers.</text>
</comment>
<comment type="subcellular location">
    <subcellularLocation>
        <location evidence="1">Cytoplasm</location>
    </subcellularLocation>
</comment>
<comment type="similarity">
    <text evidence="1">Belongs to the PanB family.</text>
</comment>
<dbReference type="EC" id="2.1.2.11" evidence="1"/>
<dbReference type="EMBL" id="CP000127">
    <property type="protein sequence ID" value="ABA57397.1"/>
    <property type="molecule type" value="Genomic_DNA"/>
</dbReference>
<dbReference type="RefSeq" id="WP_002811560.1">
    <property type="nucleotide sequence ID" value="NC_007484.1"/>
</dbReference>
<dbReference type="SMR" id="Q3JCP9"/>
<dbReference type="FunCoup" id="Q3JCP9">
    <property type="interactions" value="456"/>
</dbReference>
<dbReference type="STRING" id="323261.Noc_0885"/>
<dbReference type="KEGG" id="noc:Noc_0885"/>
<dbReference type="eggNOG" id="COG0413">
    <property type="taxonomic scope" value="Bacteria"/>
</dbReference>
<dbReference type="HOGENOM" id="CLU_036645_1_0_6"/>
<dbReference type="InParanoid" id="Q3JCP9"/>
<dbReference type="UniPathway" id="UPA00028">
    <property type="reaction ID" value="UER00003"/>
</dbReference>
<dbReference type="Proteomes" id="UP000006838">
    <property type="component" value="Chromosome"/>
</dbReference>
<dbReference type="GO" id="GO:0005737">
    <property type="term" value="C:cytoplasm"/>
    <property type="evidence" value="ECO:0007669"/>
    <property type="project" value="UniProtKB-SubCell"/>
</dbReference>
<dbReference type="GO" id="GO:0003864">
    <property type="term" value="F:3-methyl-2-oxobutanoate hydroxymethyltransferase activity"/>
    <property type="evidence" value="ECO:0007669"/>
    <property type="project" value="UniProtKB-UniRule"/>
</dbReference>
<dbReference type="GO" id="GO:0000287">
    <property type="term" value="F:magnesium ion binding"/>
    <property type="evidence" value="ECO:0007669"/>
    <property type="project" value="TreeGrafter"/>
</dbReference>
<dbReference type="GO" id="GO:0015940">
    <property type="term" value="P:pantothenate biosynthetic process"/>
    <property type="evidence" value="ECO:0007669"/>
    <property type="project" value="UniProtKB-UniRule"/>
</dbReference>
<dbReference type="CDD" id="cd06557">
    <property type="entry name" value="KPHMT-like"/>
    <property type="match status" value="1"/>
</dbReference>
<dbReference type="FunFam" id="3.20.20.60:FF:000003">
    <property type="entry name" value="3-methyl-2-oxobutanoate hydroxymethyltransferase"/>
    <property type="match status" value="1"/>
</dbReference>
<dbReference type="Gene3D" id="3.20.20.60">
    <property type="entry name" value="Phosphoenolpyruvate-binding domains"/>
    <property type="match status" value="1"/>
</dbReference>
<dbReference type="HAMAP" id="MF_00156">
    <property type="entry name" value="PanB"/>
    <property type="match status" value="1"/>
</dbReference>
<dbReference type="InterPro" id="IPR003700">
    <property type="entry name" value="Pantoate_hydroxy_MeTrfase"/>
</dbReference>
<dbReference type="InterPro" id="IPR015813">
    <property type="entry name" value="Pyrv/PenolPyrv_kinase-like_dom"/>
</dbReference>
<dbReference type="InterPro" id="IPR040442">
    <property type="entry name" value="Pyrv_kinase-like_dom_sf"/>
</dbReference>
<dbReference type="NCBIfam" id="TIGR00222">
    <property type="entry name" value="panB"/>
    <property type="match status" value="1"/>
</dbReference>
<dbReference type="NCBIfam" id="NF001452">
    <property type="entry name" value="PRK00311.1"/>
    <property type="match status" value="1"/>
</dbReference>
<dbReference type="PANTHER" id="PTHR20881">
    <property type="entry name" value="3-METHYL-2-OXOBUTANOATE HYDROXYMETHYLTRANSFERASE"/>
    <property type="match status" value="1"/>
</dbReference>
<dbReference type="PANTHER" id="PTHR20881:SF0">
    <property type="entry name" value="3-METHYL-2-OXOBUTANOATE HYDROXYMETHYLTRANSFERASE"/>
    <property type="match status" value="1"/>
</dbReference>
<dbReference type="Pfam" id="PF02548">
    <property type="entry name" value="Pantoate_transf"/>
    <property type="match status" value="1"/>
</dbReference>
<dbReference type="PIRSF" id="PIRSF000388">
    <property type="entry name" value="Pantoate_hydroxy_MeTrfase"/>
    <property type="match status" value="1"/>
</dbReference>
<dbReference type="SUPFAM" id="SSF51621">
    <property type="entry name" value="Phosphoenolpyruvate/pyruvate domain"/>
    <property type="match status" value="1"/>
</dbReference>
<organism>
    <name type="scientific">Nitrosococcus oceani (strain ATCC 19707 / BCRC 17464 / JCM 30415 / NCIMB 11848 / C-107)</name>
    <dbReference type="NCBI Taxonomy" id="323261"/>
    <lineage>
        <taxon>Bacteria</taxon>
        <taxon>Pseudomonadati</taxon>
        <taxon>Pseudomonadota</taxon>
        <taxon>Gammaproteobacteria</taxon>
        <taxon>Chromatiales</taxon>
        <taxon>Chromatiaceae</taxon>
        <taxon>Nitrosococcus</taxon>
    </lineage>
</organism>
<reference key="1">
    <citation type="journal article" date="2006" name="Appl. Environ. Microbiol.">
        <title>Complete genome sequence of the marine, chemolithoautotrophic, ammonia-oxidizing bacterium Nitrosococcus oceani ATCC 19707.</title>
        <authorList>
            <person name="Klotz M.G."/>
            <person name="Arp D.J."/>
            <person name="Chain P.S.G."/>
            <person name="El-Sheikh A.F."/>
            <person name="Hauser L.J."/>
            <person name="Hommes N.G."/>
            <person name="Larimer F.W."/>
            <person name="Malfatti S.A."/>
            <person name="Norton J.M."/>
            <person name="Poret-Peterson A.T."/>
            <person name="Vergez L.M."/>
            <person name="Ward B.B."/>
        </authorList>
    </citation>
    <scope>NUCLEOTIDE SEQUENCE [LARGE SCALE GENOMIC DNA]</scope>
    <source>
        <strain>ATCC 19707 / BCRC 17464 / JCM 30415 / NCIMB 11848 / C-107</strain>
    </source>
</reference>
<gene>
    <name evidence="1" type="primary">panB</name>
    <name type="ordered locus">Noc_0885</name>
</gene>
<sequence>MGRLTLTKLQKMKRQGEKITMLTAYDASFAALLEAAGVEVLLVGDSLGMVIQGQESTLSVTMDDMVYHCRNVSRGSQCTFILSDMPFMSYATPNQAMDNAARLMREGGAQMVKLEGGRLLGEIVEHLTARGIPVCAHLGLLPQSVHRIGGYRVQGREEISARRIQEDAMILQEAGADMLILECVPARLGSKITDALKIPVISCGAGPYCDGQVLVLYDMLGISPGKSPSFSRNFLEGTSNIPNAIQAYVSAVKKNEFPLLELSY</sequence>
<proteinExistence type="inferred from homology"/>
<evidence type="ECO:0000255" key="1">
    <source>
        <dbReference type="HAMAP-Rule" id="MF_00156"/>
    </source>
</evidence>
<protein>
    <recommendedName>
        <fullName evidence="1">3-methyl-2-oxobutanoate hydroxymethyltransferase</fullName>
        <ecNumber evidence="1">2.1.2.11</ecNumber>
    </recommendedName>
    <alternativeName>
        <fullName evidence="1">Ketopantoate hydroxymethyltransferase</fullName>
        <shortName evidence="1">KPHMT</shortName>
    </alternativeName>
</protein>
<name>PANB_NITOC</name>